<protein>
    <recommendedName>
        <fullName>Polyadenylate-binding protein RBP47B</fullName>
        <shortName>Poly(A)-binding protein RBP47B</shortName>
    </recommendedName>
    <alternativeName>
        <fullName>RNA-binding protein 47B</fullName>
        <shortName>AtRBP47B</shortName>
    </alternativeName>
</protein>
<dbReference type="EMBL" id="AP000419">
    <property type="protein sequence ID" value="BAB02953.1"/>
    <property type="status" value="ALT_SEQ"/>
    <property type="molecule type" value="Genomic_DNA"/>
</dbReference>
<dbReference type="EMBL" id="CP002686">
    <property type="protein sequence ID" value="AEE76196.1"/>
    <property type="molecule type" value="Genomic_DNA"/>
</dbReference>
<dbReference type="EMBL" id="AK226472">
    <property type="protein sequence ID" value="BAE98614.1"/>
    <property type="molecule type" value="mRNA"/>
</dbReference>
<dbReference type="EMBL" id="BT026489">
    <property type="protein sequence ID" value="ABH04596.1"/>
    <property type="molecule type" value="mRNA"/>
</dbReference>
<dbReference type="EMBL" id="AY084821">
    <property type="protein sequence ID" value="AAM67293.1"/>
    <property type="status" value="ALT_INIT"/>
    <property type="molecule type" value="mRNA"/>
</dbReference>
<dbReference type="RefSeq" id="NP_188544.1">
    <property type="nucleotide sequence ID" value="NM_112800.4"/>
</dbReference>
<dbReference type="SMR" id="Q0WW84"/>
<dbReference type="BioGRID" id="6780">
    <property type="interactions" value="1"/>
</dbReference>
<dbReference type="FunCoup" id="Q0WW84">
    <property type="interactions" value="326"/>
</dbReference>
<dbReference type="IntAct" id="Q0WW84">
    <property type="interactions" value="1"/>
</dbReference>
<dbReference type="STRING" id="3702.Q0WW84"/>
<dbReference type="GlyGen" id="Q0WW84">
    <property type="glycosylation" value="1 site"/>
</dbReference>
<dbReference type="iPTMnet" id="Q0WW84"/>
<dbReference type="PaxDb" id="3702-AT3G19130.1"/>
<dbReference type="ProteomicsDB" id="236988"/>
<dbReference type="EnsemblPlants" id="AT3G19130.1">
    <property type="protein sequence ID" value="AT3G19130.1"/>
    <property type="gene ID" value="AT3G19130"/>
</dbReference>
<dbReference type="GeneID" id="821447"/>
<dbReference type="Gramene" id="AT3G19130.1">
    <property type="protein sequence ID" value="AT3G19130.1"/>
    <property type="gene ID" value="AT3G19130"/>
</dbReference>
<dbReference type="KEGG" id="ath:AT3G19130"/>
<dbReference type="Araport" id="AT3G19130"/>
<dbReference type="TAIR" id="AT3G19130">
    <property type="gene designation" value="RBP47B"/>
</dbReference>
<dbReference type="eggNOG" id="KOG0118">
    <property type="taxonomic scope" value="Eukaryota"/>
</dbReference>
<dbReference type="HOGENOM" id="CLU_016304_2_1_1"/>
<dbReference type="InParanoid" id="Q0WW84"/>
<dbReference type="OMA" id="QVCEVEN"/>
<dbReference type="PhylomeDB" id="Q0WW84"/>
<dbReference type="CD-CODE" id="24475C75">
    <property type="entry name" value="Stress granule"/>
</dbReference>
<dbReference type="CD-CODE" id="4299E36E">
    <property type="entry name" value="Nucleolus"/>
</dbReference>
<dbReference type="PRO" id="PR:Q0WW84"/>
<dbReference type="Proteomes" id="UP000006548">
    <property type="component" value="Chromosome 3"/>
</dbReference>
<dbReference type="ExpressionAtlas" id="Q0WW84">
    <property type="expression patterns" value="baseline and differential"/>
</dbReference>
<dbReference type="GO" id="GO:0010494">
    <property type="term" value="C:cytoplasmic stress granule"/>
    <property type="evidence" value="ECO:0000314"/>
    <property type="project" value="TAIR"/>
</dbReference>
<dbReference type="GO" id="GO:0005829">
    <property type="term" value="C:cytosol"/>
    <property type="evidence" value="ECO:0000314"/>
    <property type="project" value="TAIR"/>
</dbReference>
<dbReference type="GO" id="GO:0005634">
    <property type="term" value="C:nucleus"/>
    <property type="evidence" value="ECO:0000250"/>
    <property type="project" value="UniProtKB"/>
</dbReference>
<dbReference type="GO" id="GO:0003729">
    <property type="term" value="F:mRNA binding"/>
    <property type="evidence" value="ECO:0000314"/>
    <property type="project" value="TAIR"/>
</dbReference>
<dbReference type="GO" id="GO:0008143">
    <property type="term" value="F:poly(A) binding"/>
    <property type="evidence" value="ECO:0000250"/>
    <property type="project" value="UniProtKB"/>
</dbReference>
<dbReference type="GO" id="GO:0034605">
    <property type="term" value="P:cellular response to heat"/>
    <property type="evidence" value="ECO:0000250"/>
    <property type="project" value="UniProtKB"/>
</dbReference>
<dbReference type="GO" id="GO:0006397">
    <property type="term" value="P:mRNA processing"/>
    <property type="evidence" value="ECO:0007669"/>
    <property type="project" value="UniProtKB-KW"/>
</dbReference>
<dbReference type="GO" id="GO:0034063">
    <property type="term" value="P:stress granule assembly"/>
    <property type="evidence" value="ECO:0000270"/>
    <property type="project" value="TAIR"/>
</dbReference>
<dbReference type="CDD" id="cd12344">
    <property type="entry name" value="RRM1_SECp43_like"/>
    <property type="match status" value="1"/>
</dbReference>
<dbReference type="CDD" id="cd12345">
    <property type="entry name" value="RRM2_SECp43_like"/>
    <property type="match status" value="1"/>
</dbReference>
<dbReference type="FunFam" id="3.30.70.330:FF:000395">
    <property type="entry name" value="Polyadenylate-binding protein RBP47"/>
    <property type="match status" value="1"/>
</dbReference>
<dbReference type="FunFam" id="3.30.70.330:FF:000103">
    <property type="entry name" value="Polyadenylate-binding protein RBP47B"/>
    <property type="match status" value="1"/>
</dbReference>
<dbReference type="FunFam" id="3.30.70.330:FF:000144">
    <property type="entry name" value="Polyadenylate-binding protein RBP47B"/>
    <property type="match status" value="1"/>
</dbReference>
<dbReference type="Gene3D" id="3.30.70.330">
    <property type="match status" value="3"/>
</dbReference>
<dbReference type="InterPro" id="IPR012677">
    <property type="entry name" value="Nucleotide-bd_a/b_plait_sf"/>
</dbReference>
<dbReference type="InterPro" id="IPR035979">
    <property type="entry name" value="RBD_domain_sf"/>
</dbReference>
<dbReference type="InterPro" id="IPR050825">
    <property type="entry name" value="RBM42_RBP45_47-like"/>
</dbReference>
<dbReference type="InterPro" id="IPR000504">
    <property type="entry name" value="RRM_dom"/>
</dbReference>
<dbReference type="PANTHER" id="PTHR47640:SF9">
    <property type="entry name" value="POLYADENYLATE-BINDING PROTEIN RBP47B"/>
    <property type="match status" value="1"/>
</dbReference>
<dbReference type="PANTHER" id="PTHR47640">
    <property type="entry name" value="TRNA SELENOCYSTEINE 1-ASSOCIATED PROTEIN 1-RELATED-RELATED"/>
    <property type="match status" value="1"/>
</dbReference>
<dbReference type="Pfam" id="PF00076">
    <property type="entry name" value="RRM_1"/>
    <property type="match status" value="3"/>
</dbReference>
<dbReference type="SMART" id="SM00360">
    <property type="entry name" value="RRM"/>
    <property type="match status" value="3"/>
</dbReference>
<dbReference type="SUPFAM" id="SSF54928">
    <property type="entry name" value="RNA-binding domain, RBD"/>
    <property type="match status" value="3"/>
</dbReference>
<dbReference type="PROSITE" id="PS50102">
    <property type="entry name" value="RRM"/>
    <property type="match status" value="3"/>
</dbReference>
<organism>
    <name type="scientific">Arabidopsis thaliana</name>
    <name type="common">Mouse-ear cress</name>
    <dbReference type="NCBI Taxonomy" id="3702"/>
    <lineage>
        <taxon>Eukaryota</taxon>
        <taxon>Viridiplantae</taxon>
        <taxon>Streptophyta</taxon>
        <taxon>Embryophyta</taxon>
        <taxon>Tracheophyta</taxon>
        <taxon>Spermatophyta</taxon>
        <taxon>Magnoliopsida</taxon>
        <taxon>eudicotyledons</taxon>
        <taxon>Gunneridae</taxon>
        <taxon>Pentapetalae</taxon>
        <taxon>rosids</taxon>
        <taxon>malvids</taxon>
        <taxon>Brassicales</taxon>
        <taxon>Brassicaceae</taxon>
        <taxon>Camelineae</taxon>
        <taxon>Arabidopsis</taxon>
    </lineage>
</organism>
<reference key="1">
    <citation type="journal article" date="2000" name="DNA Res.">
        <title>Structural analysis of Arabidopsis thaliana chromosome 3. II. Sequence features of the 4,251,695 bp regions covered by 90 P1, TAC and BAC clones.</title>
        <authorList>
            <person name="Kaneko T."/>
            <person name="Katoh T."/>
            <person name="Sato S."/>
            <person name="Nakamura Y."/>
            <person name="Asamizu E."/>
            <person name="Tabata S."/>
        </authorList>
    </citation>
    <scope>NUCLEOTIDE SEQUENCE [LARGE SCALE GENOMIC DNA]</scope>
    <source>
        <strain>cv. Columbia</strain>
    </source>
</reference>
<reference key="2">
    <citation type="journal article" date="2017" name="Plant J.">
        <title>Araport11: a complete reannotation of the Arabidopsis thaliana reference genome.</title>
        <authorList>
            <person name="Cheng C.Y."/>
            <person name="Krishnakumar V."/>
            <person name="Chan A.P."/>
            <person name="Thibaud-Nissen F."/>
            <person name="Schobel S."/>
            <person name="Town C.D."/>
        </authorList>
    </citation>
    <scope>GENOME REANNOTATION</scope>
    <source>
        <strain>cv. Columbia</strain>
    </source>
</reference>
<reference key="3">
    <citation type="submission" date="2006-07" db="EMBL/GenBank/DDBJ databases">
        <title>Large-scale analysis of RIKEN Arabidopsis full-length (RAFL) cDNAs.</title>
        <authorList>
            <person name="Totoki Y."/>
            <person name="Seki M."/>
            <person name="Ishida J."/>
            <person name="Nakajima M."/>
            <person name="Enju A."/>
            <person name="Kamiya A."/>
            <person name="Narusaka M."/>
            <person name="Shin-i T."/>
            <person name="Nakagawa M."/>
            <person name="Sakamoto N."/>
            <person name="Oishi K."/>
            <person name="Kohara Y."/>
            <person name="Kobayashi M."/>
            <person name="Toyoda A."/>
            <person name="Sakaki Y."/>
            <person name="Sakurai T."/>
            <person name="Iida K."/>
            <person name="Akiyama K."/>
            <person name="Satou M."/>
            <person name="Toyoda T."/>
            <person name="Konagaya A."/>
            <person name="Carninci P."/>
            <person name="Kawai J."/>
            <person name="Hayashizaki Y."/>
            <person name="Shinozaki K."/>
        </authorList>
    </citation>
    <scope>NUCLEOTIDE SEQUENCE [LARGE SCALE MRNA]</scope>
    <source>
        <strain>cv. Columbia</strain>
    </source>
</reference>
<reference key="4">
    <citation type="submission" date="2006-08" db="EMBL/GenBank/DDBJ databases">
        <title>Arabidopsis ORF Clones.</title>
        <authorList>
            <person name="Quinitio C."/>
            <person name="Chen H."/>
            <person name="Kim C.J."/>
            <person name="Shinn P."/>
            <person name="Ecker J.R."/>
        </authorList>
    </citation>
    <scope>NUCLEOTIDE SEQUENCE [LARGE SCALE MRNA]</scope>
    <source>
        <strain>cv. Columbia</strain>
    </source>
</reference>
<reference key="5">
    <citation type="submission" date="2002-03" db="EMBL/GenBank/DDBJ databases">
        <title>Full-length cDNA from Arabidopsis thaliana.</title>
        <authorList>
            <person name="Brover V.V."/>
            <person name="Troukhan M.E."/>
            <person name="Alexandrov N.A."/>
            <person name="Lu Y.-P."/>
            <person name="Flavell R.B."/>
            <person name="Feldmann K.A."/>
        </authorList>
    </citation>
    <scope>NUCLEOTIDE SEQUENCE [LARGE SCALE MRNA]</scope>
</reference>
<reference key="6">
    <citation type="journal article" date="2000" name="RNA">
        <title>RBP45 and RBP47, two oligouridylate-specific hnRNP-like proteins interacting with poly(A)+ RNA in nuclei of plant cells.</title>
        <authorList>
            <person name="Lorkovic Z.J."/>
            <person name="Wieczorek Kirk D.A."/>
            <person name="Klahre U."/>
            <person name="Hemmings-Mieszczak M."/>
            <person name="Filipowicz W."/>
        </authorList>
    </citation>
    <scope>TISSUE SPECIFICITY</scope>
    <scope>GENE FAMILY</scope>
    <scope>NOMENCLATURE</scope>
</reference>
<reference key="7">
    <citation type="journal article" date="2011" name="Mol. Cells">
        <title>Phylogenetic and expression analysis of RNA-binding proteins with triple RNA recognition motifs in plants.</title>
        <authorList>
            <person name="Peal L."/>
            <person name="Jambunathan N."/>
            <person name="Mahalingam R."/>
        </authorList>
    </citation>
    <scope>INDUCTION BY OZONE</scope>
    <scope>GENE FAMILY</scope>
    <source>
        <strain>cv. Columbia</strain>
        <strain>cv. Wassilewskija</strain>
    </source>
</reference>
<gene>
    <name type="primary">RBP47B</name>
    <name type="ordered locus">At3g19130</name>
    <name type="ORF">MVI11.3</name>
</gene>
<proteinExistence type="evidence at protein level"/>
<name>RB47B_ARATH</name>
<evidence type="ECO:0000250" key="1"/>
<evidence type="ECO:0000255" key="2">
    <source>
        <dbReference type="PROSITE-ProRule" id="PRU00176"/>
    </source>
</evidence>
<evidence type="ECO:0000256" key="3">
    <source>
        <dbReference type="SAM" id="MobiDB-lite"/>
    </source>
</evidence>
<evidence type="ECO:0000269" key="4">
    <source>
    </source>
</evidence>
<evidence type="ECO:0000269" key="5">
    <source>
    </source>
</evidence>
<evidence type="ECO:0000305" key="6"/>
<feature type="chain" id="PRO_0000415767" description="Polyadenylate-binding protein RBP47B">
    <location>
        <begin position="1"/>
        <end position="435"/>
    </location>
</feature>
<feature type="domain" description="RRM 1" evidence="2">
    <location>
        <begin position="108"/>
        <end position="188"/>
    </location>
</feature>
<feature type="domain" description="RRM 2" evidence="2">
    <location>
        <begin position="202"/>
        <end position="281"/>
    </location>
</feature>
<feature type="domain" description="RRM 3" evidence="2">
    <location>
        <begin position="321"/>
        <end position="393"/>
    </location>
</feature>
<feature type="region of interest" description="Disordered" evidence="3">
    <location>
        <begin position="1"/>
        <end position="41"/>
    </location>
</feature>
<feature type="region of interest" description="Disordered" evidence="3">
    <location>
        <begin position="85"/>
        <end position="104"/>
    </location>
</feature>
<feature type="region of interest" description="Disordered" evidence="3">
    <location>
        <begin position="392"/>
        <end position="412"/>
    </location>
</feature>
<feature type="compositionally biased region" description="Polar residues" evidence="3">
    <location>
        <begin position="1"/>
        <end position="15"/>
    </location>
</feature>
<feature type="compositionally biased region" description="Low complexity" evidence="3">
    <location>
        <begin position="29"/>
        <end position="41"/>
    </location>
</feature>
<feature type="sequence conflict" description="In Ref. 5; AAM67293." evidence="6" ref="5">
    <location>
        <begin position="31"/>
        <end position="32"/>
    </location>
</feature>
<keyword id="KW-0507">mRNA processing</keyword>
<keyword id="KW-0539">Nucleus</keyword>
<keyword id="KW-1185">Reference proteome</keyword>
<keyword id="KW-0677">Repeat</keyword>
<keyword id="KW-0694">RNA-binding</keyword>
<sequence length="435" mass="48119">MQTTNGSDSTLATSGATPPNQQTPPPPQQWQQQQQQQQQWMAAMQYPPAAAMMMMQQQQMLMYPHQYVPYNQGPYQQHHPQLHQYGSYQQHQHQQHKAIDRGSGDDVKTLWVGDLLHWMDETYLHSCFSHTGEVSSVKVIRNKLTSQSEGYGFVEFLSRAAAEEVLQNYSGSVMPNSDQPFRINWASFSTGEKRAVENGPDLSVFVGDLSPDVTDVLLHETFSDRYPSVKSAKVVIDSNTGRSKGYGFVRFGDENERSRALTEMNGAYCSNRQMRVGIATPKRAIANQQQHSSQAVILAGGHGSNGSMGYGSQSDGESTNATIFVGGIDPDVIDEDLRQPFSQFGEVVSVKIPVGKGCGFVQFADRKSAEDAIESLNGTVIGKNTVRLSWGRSPNKQWRGDSGQQWNGGYSRGHGYNNGGGYANHHDSNNYHGEN</sequence>
<accession>Q0WW84</accession>
<accession>Q8LFI9</accession>
<accession>Q9LJL7</accession>
<comment type="function">
    <text evidence="1">Heterogeneous nuclear ribonucleoprotein (hnRNP)-protein binding the poly(A) tail of mRNA and probably involved in some steps of pre-mRNA maturation.</text>
</comment>
<comment type="subunit">
    <text evidence="1">Interacts with the poly(A) tail of mRNA in nucleus.</text>
</comment>
<comment type="interaction">
    <interactant intactId="EBI-25522105">
        <id>Q0WW84</id>
    </interactant>
    <interactant intactId="EBI-346271">
        <id>Q9SHZ6</id>
        <label>UBA1A</label>
    </interactant>
    <organismsDiffer>false</organismsDiffer>
    <experiments>3</experiments>
</comment>
<comment type="subcellular location">
    <subcellularLocation>
        <location evidence="1">Nucleus</location>
    </subcellularLocation>
    <subcellularLocation>
        <location evidence="1">Cytoplasmic granule</location>
    </subcellularLocation>
</comment>
<comment type="tissue specificity">
    <text evidence="4">Expressed at low levels in leaves, stems, flowers, and seedlings.</text>
</comment>
<comment type="induction">
    <text evidence="5">Repressed by ozone-induced oxidative stress.</text>
</comment>
<comment type="similarity">
    <text evidence="6">Belongs to the polyadenylate-binding RBP47 family.</text>
</comment>
<comment type="sequence caution" evidence="6">
    <conflict type="erroneous initiation">
        <sequence resource="EMBL-CDS" id="AAM67293"/>
    </conflict>
    <text>Truncated N-terminus.</text>
</comment>
<comment type="sequence caution" evidence="6">
    <conflict type="erroneous gene model prediction">
        <sequence resource="EMBL-CDS" id="BAB02953"/>
    </conflict>
</comment>